<name>UBIG_SALSV</name>
<protein>
    <recommendedName>
        <fullName evidence="1">Ubiquinone biosynthesis O-methyltransferase</fullName>
    </recommendedName>
    <alternativeName>
        <fullName evidence="1">2-polyprenyl-6-hydroxyphenol methylase</fullName>
        <ecNumber evidence="1">2.1.1.222</ecNumber>
    </alternativeName>
    <alternativeName>
        <fullName evidence="1">3-demethylubiquinone 3-O-methyltransferase</fullName>
        <ecNumber evidence="1">2.1.1.64</ecNumber>
    </alternativeName>
</protein>
<organism>
    <name type="scientific">Salmonella schwarzengrund (strain CVM19633)</name>
    <dbReference type="NCBI Taxonomy" id="439843"/>
    <lineage>
        <taxon>Bacteria</taxon>
        <taxon>Pseudomonadati</taxon>
        <taxon>Pseudomonadota</taxon>
        <taxon>Gammaproteobacteria</taxon>
        <taxon>Enterobacterales</taxon>
        <taxon>Enterobacteriaceae</taxon>
        <taxon>Salmonella</taxon>
    </lineage>
</organism>
<reference key="1">
    <citation type="journal article" date="2011" name="J. Bacteriol.">
        <title>Comparative genomics of 28 Salmonella enterica isolates: evidence for CRISPR-mediated adaptive sublineage evolution.</title>
        <authorList>
            <person name="Fricke W.F."/>
            <person name="Mammel M.K."/>
            <person name="McDermott P.F."/>
            <person name="Tartera C."/>
            <person name="White D.G."/>
            <person name="Leclerc J.E."/>
            <person name="Ravel J."/>
            <person name="Cebula T.A."/>
        </authorList>
    </citation>
    <scope>NUCLEOTIDE SEQUENCE [LARGE SCALE GENOMIC DNA]</scope>
    <source>
        <strain>CVM19633</strain>
    </source>
</reference>
<comment type="function">
    <text evidence="1">O-methyltransferase that catalyzes the 2 O-methylation steps in the ubiquinone biosynthetic pathway.</text>
</comment>
<comment type="catalytic activity">
    <reaction evidence="1">
        <text>a 3-demethylubiquinol + S-adenosyl-L-methionine = a ubiquinol + S-adenosyl-L-homocysteine + H(+)</text>
        <dbReference type="Rhea" id="RHEA:44380"/>
        <dbReference type="Rhea" id="RHEA-COMP:9566"/>
        <dbReference type="Rhea" id="RHEA-COMP:10914"/>
        <dbReference type="ChEBI" id="CHEBI:15378"/>
        <dbReference type="ChEBI" id="CHEBI:17976"/>
        <dbReference type="ChEBI" id="CHEBI:57856"/>
        <dbReference type="ChEBI" id="CHEBI:59789"/>
        <dbReference type="ChEBI" id="CHEBI:84422"/>
        <dbReference type="EC" id="2.1.1.64"/>
    </reaction>
</comment>
<comment type="catalytic activity">
    <reaction evidence="1">
        <text>a 3-(all-trans-polyprenyl)benzene-1,2-diol + S-adenosyl-L-methionine = a 2-methoxy-6-(all-trans-polyprenyl)phenol + S-adenosyl-L-homocysteine + H(+)</text>
        <dbReference type="Rhea" id="RHEA:31411"/>
        <dbReference type="Rhea" id="RHEA-COMP:9550"/>
        <dbReference type="Rhea" id="RHEA-COMP:9551"/>
        <dbReference type="ChEBI" id="CHEBI:15378"/>
        <dbReference type="ChEBI" id="CHEBI:57856"/>
        <dbReference type="ChEBI" id="CHEBI:59789"/>
        <dbReference type="ChEBI" id="CHEBI:62729"/>
        <dbReference type="ChEBI" id="CHEBI:62731"/>
        <dbReference type="EC" id="2.1.1.222"/>
    </reaction>
</comment>
<comment type="pathway">
    <text evidence="1">Cofactor biosynthesis; ubiquinone biosynthesis.</text>
</comment>
<comment type="similarity">
    <text evidence="1">Belongs to the methyltransferase superfamily. UbiG/COQ3 family.</text>
</comment>
<feature type="chain" id="PRO_1000199702" description="Ubiquinone biosynthesis O-methyltransferase">
    <location>
        <begin position="1"/>
        <end position="242"/>
    </location>
</feature>
<feature type="binding site" evidence="1">
    <location>
        <position position="44"/>
    </location>
    <ligand>
        <name>S-adenosyl-L-methionine</name>
        <dbReference type="ChEBI" id="CHEBI:59789"/>
    </ligand>
</feature>
<feature type="binding site" evidence="1">
    <location>
        <position position="64"/>
    </location>
    <ligand>
        <name>S-adenosyl-L-methionine</name>
        <dbReference type="ChEBI" id="CHEBI:59789"/>
    </ligand>
</feature>
<feature type="binding site" evidence="1">
    <location>
        <position position="85"/>
    </location>
    <ligand>
        <name>S-adenosyl-L-methionine</name>
        <dbReference type="ChEBI" id="CHEBI:59789"/>
    </ligand>
</feature>
<feature type="binding site" evidence="1">
    <location>
        <position position="129"/>
    </location>
    <ligand>
        <name>S-adenosyl-L-methionine</name>
        <dbReference type="ChEBI" id="CHEBI:59789"/>
    </ligand>
</feature>
<gene>
    <name evidence="1" type="primary">ubiG</name>
    <name type="ordered locus">SeSA_A2503</name>
</gene>
<evidence type="ECO:0000255" key="1">
    <source>
        <dbReference type="HAMAP-Rule" id="MF_00472"/>
    </source>
</evidence>
<proteinExistence type="inferred from homology"/>
<sequence>MNTEKPSVAHNVDHNEIAKFEAVASRWWDLEGEFKPLHRINPLRLGYITERSGGLFGKKVLDVGCGGGILAESMAREGATVTGLDMGFEPLQVAKLHALESGIEVEYVQETVEEHAAKHAQQYDVVTCMEMLEHVPDPQSVVHACAQLVKPGGEVFFSTLNRNGKSWLMAVVGAEYILRMVPKGTHDVKKFIKPAELLSWVDETVLKEQHITGLHYNPITNTFKLGPGVDVNYMLHTRAKKA</sequence>
<keyword id="KW-0489">Methyltransferase</keyword>
<keyword id="KW-0949">S-adenosyl-L-methionine</keyword>
<keyword id="KW-0808">Transferase</keyword>
<keyword id="KW-0831">Ubiquinone biosynthesis</keyword>
<accession>B4TPG0</accession>
<dbReference type="EC" id="2.1.1.222" evidence="1"/>
<dbReference type="EC" id="2.1.1.64" evidence="1"/>
<dbReference type="EMBL" id="CP001127">
    <property type="protein sequence ID" value="ACF92122.1"/>
    <property type="molecule type" value="Genomic_DNA"/>
</dbReference>
<dbReference type="RefSeq" id="WP_001091009.1">
    <property type="nucleotide sequence ID" value="NC_011094.1"/>
</dbReference>
<dbReference type="SMR" id="B4TPG0"/>
<dbReference type="KEGG" id="sew:SeSA_A2503"/>
<dbReference type="HOGENOM" id="CLU_042432_5_0_6"/>
<dbReference type="UniPathway" id="UPA00232"/>
<dbReference type="Proteomes" id="UP000001865">
    <property type="component" value="Chromosome"/>
</dbReference>
<dbReference type="GO" id="GO:0102208">
    <property type="term" value="F:2-polyprenyl-6-hydroxyphenol methylase activity"/>
    <property type="evidence" value="ECO:0007669"/>
    <property type="project" value="UniProtKB-EC"/>
</dbReference>
<dbReference type="GO" id="GO:0061542">
    <property type="term" value="F:3-demethylubiquinol 3-O-methyltransferase activity"/>
    <property type="evidence" value="ECO:0007669"/>
    <property type="project" value="UniProtKB-UniRule"/>
</dbReference>
<dbReference type="GO" id="GO:0010420">
    <property type="term" value="F:polyprenyldihydroxybenzoate methyltransferase activity"/>
    <property type="evidence" value="ECO:0007669"/>
    <property type="project" value="InterPro"/>
</dbReference>
<dbReference type="GO" id="GO:0032259">
    <property type="term" value="P:methylation"/>
    <property type="evidence" value="ECO:0007669"/>
    <property type="project" value="UniProtKB-KW"/>
</dbReference>
<dbReference type="CDD" id="cd02440">
    <property type="entry name" value="AdoMet_MTases"/>
    <property type="match status" value="1"/>
</dbReference>
<dbReference type="FunFam" id="3.40.50.150:FF:000028">
    <property type="entry name" value="Ubiquinone biosynthesis O-methyltransferase"/>
    <property type="match status" value="1"/>
</dbReference>
<dbReference type="Gene3D" id="3.40.50.150">
    <property type="entry name" value="Vaccinia Virus protein VP39"/>
    <property type="match status" value="1"/>
</dbReference>
<dbReference type="HAMAP" id="MF_00472">
    <property type="entry name" value="UbiG"/>
    <property type="match status" value="1"/>
</dbReference>
<dbReference type="InterPro" id="IPR029063">
    <property type="entry name" value="SAM-dependent_MTases_sf"/>
</dbReference>
<dbReference type="InterPro" id="IPR010233">
    <property type="entry name" value="UbiG_MeTrfase"/>
</dbReference>
<dbReference type="NCBIfam" id="TIGR01983">
    <property type="entry name" value="UbiG"/>
    <property type="match status" value="1"/>
</dbReference>
<dbReference type="PANTHER" id="PTHR43464">
    <property type="entry name" value="METHYLTRANSFERASE"/>
    <property type="match status" value="1"/>
</dbReference>
<dbReference type="PANTHER" id="PTHR43464:SF19">
    <property type="entry name" value="UBIQUINONE BIOSYNTHESIS O-METHYLTRANSFERASE, MITOCHONDRIAL"/>
    <property type="match status" value="1"/>
</dbReference>
<dbReference type="Pfam" id="PF13489">
    <property type="entry name" value="Methyltransf_23"/>
    <property type="match status" value="1"/>
</dbReference>
<dbReference type="SUPFAM" id="SSF53335">
    <property type="entry name" value="S-adenosyl-L-methionine-dependent methyltransferases"/>
    <property type="match status" value="1"/>
</dbReference>